<evidence type="ECO:0000255" key="1">
    <source>
        <dbReference type="HAMAP-Rule" id="MF_00921"/>
    </source>
</evidence>
<evidence type="ECO:0000305" key="2"/>
<organism>
    <name type="scientific">Brucella melitensis biotype 1 (strain ATCC 23456 / CCUG 17765 / NCTC 10094 / 16M)</name>
    <dbReference type="NCBI Taxonomy" id="224914"/>
    <lineage>
        <taxon>Bacteria</taxon>
        <taxon>Pseudomonadati</taxon>
        <taxon>Pseudomonadota</taxon>
        <taxon>Alphaproteobacteria</taxon>
        <taxon>Hyphomicrobiales</taxon>
        <taxon>Brucellaceae</taxon>
        <taxon>Brucella/Ochrobactrum group</taxon>
        <taxon>Brucella</taxon>
    </lineage>
</organism>
<dbReference type="EC" id="2.7.11.32" evidence="1"/>
<dbReference type="EC" id="2.7.4.27" evidence="1"/>
<dbReference type="EMBL" id="AE008917">
    <property type="protein sequence ID" value="AAL53241.1"/>
    <property type="status" value="ALT_INIT"/>
    <property type="molecule type" value="Genomic_DNA"/>
</dbReference>
<dbReference type="PIR" id="AF3509">
    <property type="entry name" value="AF3509"/>
</dbReference>
<dbReference type="RefSeq" id="WP_002965131.1">
    <property type="nucleotide sequence ID" value="NZ_GG703778.1"/>
</dbReference>
<dbReference type="SMR" id="P67193"/>
<dbReference type="KEGG" id="bme:BMEI2060"/>
<dbReference type="KEGG" id="bmel:DK63_1434"/>
<dbReference type="PATRIC" id="fig|224914.52.peg.1510"/>
<dbReference type="eggNOG" id="COG1806">
    <property type="taxonomic scope" value="Bacteria"/>
</dbReference>
<dbReference type="PhylomeDB" id="P67193"/>
<dbReference type="Proteomes" id="UP000000419">
    <property type="component" value="Chromosome I"/>
</dbReference>
<dbReference type="GO" id="GO:0043531">
    <property type="term" value="F:ADP binding"/>
    <property type="evidence" value="ECO:0007669"/>
    <property type="project" value="UniProtKB-UniRule"/>
</dbReference>
<dbReference type="GO" id="GO:0005524">
    <property type="term" value="F:ATP binding"/>
    <property type="evidence" value="ECO:0007669"/>
    <property type="project" value="InterPro"/>
</dbReference>
<dbReference type="GO" id="GO:0016776">
    <property type="term" value="F:phosphotransferase activity, phosphate group as acceptor"/>
    <property type="evidence" value="ECO:0007669"/>
    <property type="project" value="UniProtKB-UniRule"/>
</dbReference>
<dbReference type="GO" id="GO:0004674">
    <property type="term" value="F:protein serine/threonine kinase activity"/>
    <property type="evidence" value="ECO:0007669"/>
    <property type="project" value="UniProtKB-UniRule"/>
</dbReference>
<dbReference type="HAMAP" id="MF_00921">
    <property type="entry name" value="PDRP"/>
    <property type="match status" value="1"/>
</dbReference>
<dbReference type="InterPro" id="IPR005177">
    <property type="entry name" value="Kinase-pyrophosphorylase"/>
</dbReference>
<dbReference type="InterPro" id="IPR026565">
    <property type="entry name" value="PPDK_reg"/>
</dbReference>
<dbReference type="NCBIfam" id="NF003742">
    <property type="entry name" value="PRK05339.1"/>
    <property type="match status" value="1"/>
</dbReference>
<dbReference type="PANTHER" id="PTHR31756">
    <property type="entry name" value="PYRUVATE, PHOSPHATE DIKINASE REGULATORY PROTEIN 1, CHLOROPLASTIC"/>
    <property type="match status" value="1"/>
</dbReference>
<dbReference type="PANTHER" id="PTHR31756:SF3">
    <property type="entry name" value="PYRUVATE, PHOSPHATE DIKINASE REGULATORY PROTEIN 1, CHLOROPLASTIC"/>
    <property type="match status" value="1"/>
</dbReference>
<dbReference type="Pfam" id="PF03618">
    <property type="entry name" value="Kinase-PPPase"/>
    <property type="match status" value="1"/>
</dbReference>
<sequence>MTRPLSYFHLHLISDATGETLLAAGRAAAAQYANARAIEHIYPLIRTEKQLRKVLEGIDAEPGIVLYTVVDQKLAAIIDESCADMGVPSVSVLEPVLNTFQSYLGAPAHRRASAQHVLNADYFRRIDALNFMMEHDDGQLPLDIEEADVIIVGISRTSKTPTSIYLANRGIKAANVPLVLGIPVPEILFAAKRPLIVGLVATAERISQIRQNRPLGNIPSLDTGLYTDRVSISEELAYARNLCNRHGWPIIDVSRRSIEETAAAILALLRNGKKEGSSS</sequence>
<gene>
    <name type="ordered locus">BMEI2060</name>
</gene>
<feature type="chain" id="PRO_0000196639" description="Putative pyruvate, phosphate dikinase regulatory protein">
    <location>
        <begin position="1"/>
        <end position="279"/>
    </location>
</feature>
<feature type="binding site" evidence="1">
    <location>
        <begin position="153"/>
        <end position="160"/>
    </location>
    <ligand>
        <name>ADP</name>
        <dbReference type="ChEBI" id="CHEBI:456216"/>
    </ligand>
</feature>
<accession>P67193</accession>
<accession>Q8FY23</accession>
<accession>Q8YE18</accession>
<protein>
    <recommendedName>
        <fullName evidence="1">Putative pyruvate, phosphate dikinase regulatory protein</fullName>
        <shortName evidence="1">PPDK regulatory protein</shortName>
        <ecNumber evidence="1">2.7.11.32</ecNumber>
        <ecNumber evidence="1">2.7.4.27</ecNumber>
    </recommendedName>
</protein>
<comment type="function">
    <text evidence="1">Bifunctional serine/threonine kinase and phosphorylase involved in the regulation of the pyruvate, phosphate dikinase (PPDK) by catalyzing its phosphorylation/dephosphorylation.</text>
</comment>
<comment type="catalytic activity">
    <reaction evidence="1">
        <text>N(tele)-phospho-L-histidyl/L-threonyl-[pyruvate, phosphate dikinase] + ADP = N(tele)-phospho-L-histidyl/O-phospho-L-threonyl-[pyruvate, phosphate dikinase] + AMP + H(+)</text>
        <dbReference type="Rhea" id="RHEA:43692"/>
        <dbReference type="Rhea" id="RHEA-COMP:10650"/>
        <dbReference type="Rhea" id="RHEA-COMP:10651"/>
        <dbReference type="ChEBI" id="CHEBI:15378"/>
        <dbReference type="ChEBI" id="CHEBI:30013"/>
        <dbReference type="ChEBI" id="CHEBI:61977"/>
        <dbReference type="ChEBI" id="CHEBI:83586"/>
        <dbReference type="ChEBI" id="CHEBI:456215"/>
        <dbReference type="ChEBI" id="CHEBI:456216"/>
        <dbReference type="EC" id="2.7.11.32"/>
    </reaction>
</comment>
<comment type="catalytic activity">
    <reaction evidence="1">
        <text>N(tele)-phospho-L-histidyl/O-phospho-L-threonyl-[pyruvate, phosphate dikinase] + phosphate + H(+) = N(tele)-phospho-L-histidyl/L-threonyl-[pyruvate, phosphate dikinase] + diphosphate</text>
        <dbReference type="Rhea" id="RHEA:43696"/>
        <dbReference type="Rhea" id="RHEA-COMP:10650"/>
        <dbReference type="Rhea" id="RHEA-COMP:10651"/>
        <dbReference type="ChEBI" id="CHEBI:15378"/>
        <dbReference type="ChEBI" id="CHEBI:30013"/>
        <dbReference type="ChEBI" id="CHEBI:33019"/>
        <dbReference type="ChEBI" id="CHEBI:43474"/>
        <dbReference type="ChEBI" id="CHEBI:61977"/>
        <dbReference type="ChEBI" id="CHEBI:83586"/>
        <dbReference type="EC" id="2.7.4.27"/>
    </reaction>
</comment>
<comment type="similarity">
    <text evidence="1">Belongs to the pyruvate, phosphate/water dikinase regulatory protein family. PDRP subfamily.</text>
</comment>
<comment type="sequence caution" evidence="2">
    <conflict type="erroneous initiation">
        <sequence resource="EMBL-CDS" id="AAL53241"/>
    </conflict>
</comment>
<proteinExistence type="inferred from homology"/>
<name>PDRP_BRUME</name>
<reference key="1">
    <citation type="journal article" date="2002" name="Proc. Natl. Acad. Sci. U.S.A.">
        <title>The genome sequence of the facultative intracellular pathogen Brucella melitensis.</title>
        <authorList>
            <person name="DelVecchio V.G."/>
            <person name="Kapatral V."/>
            <person name="Redkar R.J."/>
            <person name="Patra G."/>
            <person name="Mujer C."/>
            <person name="Los T."/>
            <person name="Ivanova N."/>
            <person name="Anderson I."/>
            <person name="Bhattacharyya A."/>
            <person name="Lykidis A."/>
            <person name="Reznik G."/>
            <person name="Jablonski L."/>
            <person name="Larsen N."/>
            <person name="D'Souza M."/>
            <person name="Bernal A."/>
            <person name="Mazur M."/>
            <person name="Goltsman E."/>
            <person name="Selkov E."/>
            <person name="Elzer P.H."/>
            <person name="Hagius S."/>
            <person name="O'Callaghan D."/>
            <person name="Letesson J.-J."/>
            <person name="Haselkorn R."/>
            <person name="Kyrpides N.C."/>
            <person name="Overbeek R."/>
        </authorList>
    </citation>
    <scope>NUCLEOTIDE SEQUENCE [LARGE SCALE GENOMIC DNA]</scope>
    <source>
        <strain>ATCC 23456 / CCUG 17765 / NCTC 10094 / 16M</strain>
    </source>
</reference>
<keyword id="KW-0418">Kinase</keyword>
<keyword id="KW-0547">Nucleotide-binding</keyword>
<keyword id="KW-0723">Serine/threonine-protein kinase</keyword>
<keyword id="KW-0808">Transferase</keyword>